<feature type="chain" id="PRO_0000306666" description="Small ribosomal subunit protein uS13">
    <location>
        <begin position="1"/>
        <end position="123"/>
    </location>
</feature>
<feature type="region of interest" description="Disordered" evidence="2">
    <location>
        <begin position="94"/>
        <end position="123"/>
    </location>
</feature>
<organism>
    <name type="scientific">Oenococcus oeni (strain ATCC BAA-331 / PSU-1)</name>
    <dbReference type="NCBI Taxonomy" id="203123"/>
    <lineage>
        <taxon>Bacteria</taxon>
        <taxon>Bacillati</taxon>
        <taxon>Bacillota</taxon>
        <taxon>Bacilli</taxon>
        <taxon>Lactobacillales</taxon>
        <taxon>Lactobacillaceae</taxon>
        <taxon>Oenococcus</taxon>
    </lineage>
</organism>
<gene>
    <name evidence="1" type="primary">rpsM</name>
    <name type="ordered locus">OEOE_0618</name>
</gene>
<proteinExistence type="inferred from homology"/>
<keyword id="KW-1185">Reference proteome</keyword>
<keyword id="KW-0687">Ribonucleoprotein</keyword>
<keyword id="KW-0689">Ribosomal protein</keyword>
<keyword id="KW-0694">RNA-binding</keyword>
<keyword id="KW-0699">rRNA-binding</keyword>
<keyword id="KW-0820">tRNA-binding</keyword>
<evidence type="ECO:0000255" key="1">
    <source>
        <dbReference type="HAMAP-Rule" id="MF_01315"/>
    </source>
</evidence>
<evidence type="ECO:0000256" key="2">
    <source>
        <dbReference type="SAM" id="MobiDB-lite"/>
    </source>
</evidence>
<evidence type="ECO:0000305" key="3"/>
<name>RS13_OENOB</name>
<reference key="1">
    <citation type="journal article" date="2006" name="Proc. Natl. Acad. Sci. U.S.A.">
        <title>Comparative genomics of the lactic acid bacteria.</title>
        <authorList>
            <person name="Makarova K.S."/>
            <person name="Slesarev A."/>
            <person name="Wolf Y.I."/>
            <person name="Sorokin A."/>
            <person name="Mirkin B."/>
            <person name="Koonin E.V."/>
            <person name="Pavlov A."/>
            <person name="Pavlova N."/>
            <person name="Karamychev V."/>
            <person name="Polouchine N."/>
            <person name="Shakhova V."/>
            <person name="Grigoriev I."/>
            <person name="Lou Y."/>
            <person name="Rohksar D."/>
            <person name="Lucas S."/>
            <person name="Huang K."/>
            <person name="Goodstein D.M."/>
            <person name="Hawkins T."/>
            <person name="Plengvidhya V."/>
            <person name="Welker D."/>
            <person name="Hughes J."/>
            <person name="Goh Y."/>
            <person name="Benson A."/>
            <person name="Baldwin K."/>
            <person name="Lee J.-H."/>
            <person name="Diaz-Muniz I."/>
            <person name="Dosti B."/>
            <person name="Smeianov V."/>
            <person name="Wechter W."/>
            <person name="Barabote R."/>
            <person name="Lorca G."/>
            <person name="Altermann E."/>
            <person name="Barrangou R."/>
            <person name="Ganesan B."/>
            <person name="Xie Y."/>
            <person name="Rawsthorne H."/>
            <person name="Tamir D."/>
            <person name="Parker C."/>
            <person name="Breidt F."/>
            <person name="Broadbent J.R."/>
            <person name="Hutkins R."/>
            <person name="O'Sullivan D."/>
            <person name="Steele J."/>
            <person name="Unlu G."/>
            <person name="Saier M.H. Jr."/>
            <person name="Klaenhammer T."/>
            <person name="Richardson P."/>
            <person name="Kozyavkin S."/>
            <person name="Weimer B.C."/>
            <person name="Mills D.A."/>
        </authorList>
    </citation>
    <scope>NUCLEOTIDE SEQUENCE [LARGE SCALE GENOMIC DNA]</scope>
    <source>
        <strain>ATCC BAA-331 / PSU-1</strain>
    </source>
</reference>
<accession>Q04G62</accession>
<comment type="function">
    <text evidence="1">Located at the top of the head of the 30S subunit, it contacts several helices of the 16S rRNA. In the 70S ribosome it contacts the 23S rRNA (bridge B1a) and protein L5 of the 50S subunit (bridge B1b), connecting the 2 subunits; these bridges are implicated in subunit movement. Contacts the tRNAs in the A and P-sites.</text>
</comment>
<comment type="subunit">
    <text evidence="1">Part of the 30S ribosomal subunit. Forms a loose heterodimer with protein S19. Forms two bridges to the 50S subunit in the 70S ribosome.</text>
</comment>
<comment type="similarity">
    <text evidence="1">Belongs to the universal ribosomal protein uS13 family.</text>
</comment>
<protein>
    <recommendedName>
        <fullName evidence="1">Small ribosomal subunit protein uS13</fullName>
    </recommendedName>
    <alternativeName>
        <fullName evidence="3">30S ribosomal protein S13</fullName>
    </alternativeName>
</protein>
<dbReference type="EMBL" id="CP000411">
    <property type="protein sequence ID" value="ABJ56560.1"/>
    <property type="molecule type" value="Genomic_DNA"/>
</dbReference>
<dbReference type="RefSeq" id="WP_002816335.1">
    <property type="nucleotide sequence ID" value="NC_008528.1"/>
</dbReference>
<dbReference type="SMR" id="Q04G62"/>
<dbReference type="STRING" id="203123.OEOE_0618"/>
<dbReference type="GeneID" id="75065440"/>
<dbReference type="KEGG" id="ooe:OEOE_0618"/>
<dbReference type="eggNOG" id="COG0099">
    <property type="taxonomic scope" value="Bacteria"/>
</dbReference>
<dbReference type="HOGENOM" id="CLU_103849_1_1_9"/>
<dbReference type="Proteomes" id="UP000000774">
    <property type="component" value="Chromosome"/>
</dbReference>
<dbReference type="GO" id="GO:0005829">
    <property type="term" value="C:cytosol"/>
    <property type="evidence" value="ECO:0007669"/>
    <property type="project" value="TreeGrafter"/>
</dbReference>
<dbReference type="GO" id="GO:0015935">
    <property type="term" value="C:small ribosomal subunit"/>
    <property type="evidence" value="ECO:0007669"/>
    <property type="project" value="TreeGrafter"/>
</dbReference>
<dbReference type="GO" id="GO:0019843">
    <property type="term" value="F:rRNA binding"/>
    <property type="evidence" value="ECO:0007669"/>
    <property type="project" value="UniProtKB-UniRule"/>
</dbReference>
<dbReference type="GO" id="GO:0003735">
    <property type="term" value="F:structural constituent of ribosome"/>
    <property type="evidence" value="ECO:0007669"/>
    <property type="project" value="InterPro"/>
</dbReference>
<dbReference type="GO" id="GO:0000049">
    <property type="term" value="F:tRNA binding"/>
    <property type="evidence" value="ECO:0007669"/>
    <property type="project" value="UniProtKB-UniRule"/>
</dbReference>
<dbReference type="GO" id="GO:0006412">
    <property type="term" value="P:translation"/>
    <property type="evidence" value="ECO:0007669"/>
    <property type="project" value="UniProtKB-UniRule"/>
</dbReference>
<dbReference type="FunFam" id="1.10.8.50:FF:000001">
    <property type="entry name" value="30S ribosomal protein S13"/>
    <property type="match status" value="1"/>
</dbReference>
<dbReference type="FunFam" id="4.10.910.10:FF:000001">
    <property type="entry name" value="30S ribosomal protein S13"/>
    <property type="match status" value="1"/>
</dbReference>
<dbReference type="Gene3D" id="1.10.8.50">
    <property type="match status" value="1"/>
</dbReference>
<dbReference type="Gene3D" id="4.10.910.10">
    <property type="entry name" value="30s ribosomal protein s13, domain 2"/>
    <property type="match status" value="1"/>
</dbReference>
<dbReference type="HAMAP" id="MF_01315">
    <property type="entry name" value="Ribosomal_uS13"/>
    <property type="match status" value="1"/>
</dbReference>
<dbReference type="InterPro" id="IPR027437">
    <property type="entry name" value="Rbsml_uS13_C"/>
</dbReference>
<dbReference type="InterPro" id="IPR001892">
    <property type="entry name" value="Ribosomal_uS13"/>
</dbReference>
<dbReference type="InterPro" id="IPR010979">
    <property type="entry name" value="Ribosomal_uS13-like_H2TH"/>
</dbReference>
<dbReference type="InterPro" id="IPR019980">
    <property type="entry name" value="Ribosomal_uS13_bac-type"/>
</dbReference>
<dbReference type="InterPro" id="IPR018269">
    <property type="entry name" value="Ribosomal_uS13_CS"/>
</dbReference>
<dbReference type="NCBIfam" id="TIGR03631">
    <property type="entry name" value="uS13_bact"/>
    <property type="match status" value="1"/>
</dbReference>
<dbReference type="PANTHER" id="PTHR10871">
    <property type="entry name" value="30S RIBOSOMAL PROTEIN S13/40S RIBOSOMAL PROTEIN S18"/>
    <property type="match status" value="1"/>
</dbReference>
<dbReference type="PANTHER" id="PTHR10871:SF1">
    <property type="entry name" value="SMALL RIBOSOMAL SUBUNIT PROTEIN US13M"/>
    <property type="match status" value="1"/>
</dbReference>
<dbReference type="Pfam" id="PF00416">
    <property type="entry name" value="Ribosomal_S13"/>
    <property type="match status" value="1"/>
</dbReference>
<dbReference type="PIRSF" id="PIRSF002134">
    <property type="entry name" value="Ribosomal_S13"/>
    <property type="match status" value="1"/>
</dbReference>
<dbReference type="SUPFAM" id="SSF46946">
    <property type="entry name" value="S13-like H2TH domain"/>
    <property type="match status" value="1"/>
</dbReference>
<dbReference type="PROSITE" id="PS00646">
    <property type="entry name" value="RIBOSOMAL_S13_1"/>
    <property type="match status" value="1"/>
</dbReference>
<dbReference type="PROSITE" id="PS50159">
    <property type="entry name" value="RIBOSOMAL_S13_2"/>
    <property type="match status" value="1"/>
</dbReference>
<sequence length="123" mass="13624">MARIAGIDLPRDKRIVIGLTYIYGIGNTTAEKVLAEAGVSEDVRVRDLSPEDEDKVRAAVDKLNLTLEGDLRREVSLNIKGLQEIASYRGIRHRRGLPVRGQHTKNNARTRKGPARAIAGKKK</sequence>